<comment type="function">
    <text evidence="3 6 8">Receptor for gastrin-releasing peptide (GRP) (PubMed:8391296). Signals via association with G proteins that activate a phosphatidylinositol-calcium second messenger system, resulting in Akt phosphorylation. Contributes to the regulation of food intake. Contributes to the perception of prurient stimuli and transmission of itch signals in the spinal cord that promote scratching behavior, but does not play a role in the perception of pain. Contributes primarily to nonhistaminergic itch sensation. In one study, shown to act in the amygdala as part of an inhibitory network which inhibits memory specifically related to learned fear (By similarity). In another study, shown to contribute to disinhibition of glutamatergic cells in the auditory cortex via signaling on vasoactive intestinal peptide-expressing cells which leads to enhanced auditory fear memories (By similarity). Contributes to the induction of sighing through signaling in the pre-Botzinger complex, a cluster of several thousand neurons in the ventrolateral medulla responsible for inspiration during respiratory activity (PubMed:26855425).</text>
</comment>
<comment type="subcellular location">
    <subcellularLocation>
        <location evidence="8">Cell membrane</location>
        <topology evidence="4">Multi-pass membrane protein</topology>
    </subcellularLocation>
</comment>
<comment type="tissue specificity">
    <text evidence="7">Expressed in the hippocampal CA1 region (at protein level).</text>
</comment>
<comment type="similarity">
    <text evidence="5">Belongs to the G-protein coupled receptor 1 family.</text>
</comment>
<sequence>MDPNNCSHLNLEVDPFLSCNNTFNQTLNPPKMDNWFHPGIIYVIPAVYGLIIVIGLIGNITLIKIFCTVKSMRNVPNLFISSLALGDLLLLVTCAPVDASKYLADRWLFGRIGCKLIPFIQLTSVGVSVFTLTALSADRYKAIVRPMDIQASHALMKICLKAALIWIVSMLLAIPEAVFSDLHPFHVKDTNQTFISCAPYPHSNELHPKIHSMASFLVFYIIPLSIISVYYYFIARNLIQSAYNLPVEGNIHVKKQIESRKRLAKTVLVFVGLFAFCWLPNHVIYLYRSYHYSEVDTSMLHFITSICARLLAFTNSCVNPFALYLLSKSFRKQFNTQLLCCQPSLLNRSHSTGRSTTCMTSFKSTNPSATFSLINGNICHEGYV</sequence>
<feature type="chain" id="PRO_0000069664" description="Gastrin-releasing peptide receptor">
    <location>
        <begin position="1"/>
        <end position="384"/>
    </location>
</feature>
<feature type="topological domain" description="Extracellular" evidence="4">
    <location>
        <begin position="1"/>
        <end position="39"/>
    </location>
</feature>
<feature type="transmembrane region" description="Helical; Name=1" evidence="4">
    <location>
        <begin position="40"/>
        <end position="63"/>
    </location>
</feature>
<feature type="topological domain" description="Cytoplasmic" evidence="4">
    <location>
        <begin position="64"/>
        <end position="77"/>
    </location>
</feature>
<feature type="transmembrane region" description="Helical; Name=2" evidence="4">
    <location>
        <begin position="78"/>
        <end position="97"/>
    </location>
</feature>
<feature type="topological domain" description="Extracellular" evidence="4">
    <location>
        <begin position="98"/>
        <end position="115"/>
    </location>
</feature>
<feature type="transmembrane region" description="Helical; Name=3" evidence="4">
    <location>
        <begin position="116"/>
        <end position="137"/>
    </location>
</feature>
<feature type="topological domain" description="Cytoplasmic" evidence="4">
    <location>
        <begin position="138"/>
        <end position="153"/>
    </location>
</feature>
<feature type="transmembrane region" description="Helical; Name=4" evidence="4">
    <location>
        <begin position="154"/>
        <end position="175"/>
    </location>
</feature>
<feature type="topological domain" description="Extracellular" evidence="4">
    <location>
        <begin position="176"/>
        <end position="209"/>
    </location>
</feature>
<feature type="transmembrane region" description="Helical; Name=5" evidence="4">
    <location>
        <begin position="210"/>
        <end position="235"/>
    </location>
</feature>
<feature type="topological domain" description="Cytoplasmic" evidence="4">
    <location>
        <begin position="236"/>
        <end position="265"/>
    </location>
</feature>
<feature type="transmembrane region" description="Helical; Name=6" evidence="4">
    <location>
        <begin position="266"/>
        <end position="286"/>
    </location>
</feature>
<feature type="topological domain" description="Extracellular" evidence="4">
    <location>
        <begin position="287"/>
        <end position="299"/>
    </location>
</feature>
<feature type="transmembrane region" description="Helical; Name=7" evidence="4">
    <location>
        <begin position="300"/>
        <end position="326"/>
    </location>
</feature>
<feature type="topological domain" description="Cytoplasmic" evidence="4">
    <location>
        <begin position="327"/>
        <end position="384"/>
    </location>
</feature>
<feature type="modified residue" description="Phosphoserine" evidence="2">
    <location>
        <position position="351"/>
    </location>
</feature>
<feature type="lipid moiety-binding region" description="S-palmitoyl cysteine" evidence="1">
    <location>
        <position position="340"/>
    </location>
</feature>
<feature type="glycosylation site" description="N-linked (GlcNAc...) asparagine" evidence="4">
    <location>
        <position position="5"/>
    </location>
</feature>
<feature type="glycosylation site" description="N-linked (GlcNAc...) asparagine" evidence="4">
    <location>
        <position position="20"/>
    </location>
</feature>
<feature type="glycosylation site" description="N-linked (GlcNAc...) asparagine" evidence="4">
    <location>
        <position position="24"/>
    </location>
</feature>
<feature type="disulfide bond" evidence="5">
    <location>
        <begin position="114"/>
        <end position="197"/>
    </location>
</feature>
<feature type="sequence conflict" description="In Ref. 1; CAA39988." ref="1">
    <original>N</original>
    <variation>S</variation>
    <location>
        <position position="28"/>
    </location>
</feature>
<keyword id="KW-1003">Cell membrane</keyword>
<keyword id="KW-1015">Disulfide bond</keyword>
<keyword id="KW-0297">G-protein coupled receptor</keyword>
<keyword id="KW-0325">Glycoprotein</keyword>
<keyword id="KW-0449">Lipoprotein</keyword>
<keyword id="KW-0472">Membrane</keyword>
<keyword id="KW-0564">Palmitate</keyword>
<keyword id="KW-0597">Phosphoprotein</keyword>
<keyword id="KW-0675">Receptor</keyword>
<keyword id="KW-1185">Reference proteome</keyword>
<keyword id="KW-0807">Transducer</keyword>
<keyword id="KW-0812">Transmembrane</keyword>
<keyword id="KW-1133">Transmembrane helix</keyword>
<accession>P52500</accession>
<accession>G3V6I7</accession>
<evidence type="ECO:0000250" key="1"/>
<evidence type="ECO:0000250" key="2">
    <source>
        <dbReference type="UniProtKB" id="O54799"/>
    </source>
</evidence>
<evidence type="ECO:0000250" key="3">
    <source>
        <dbReference type="UniProtKB" id="P21729"/>
    </source>
</evidence>
<evidence type="ECO:0000255" key="4"/>
<evidence type="ECO:0000255" key="5">
    <source>
        <dbReference type="PROSITE-ProRule" id="PRU00521"/>
    </source>
</evidence>
<evidence type="ECO:0000269" key="6">
    <source>
    </source>
</evidence>
<evidence type="ECO:0000269" key="7">
    <source>
    </source>
</evidence>
<evidence type="ECO:0000269" key="8">
    <source>
    </source>
</evidence>
<gene>
    <name type="primary">Grpr</name>
</gene>
<name>GRPR_RAT</name>
<organism>
    <name type="scientific">Rattus norvegicus</name>
    <name type="common">Rat</name>
    <dbReference type="NCBI Taxonomy" id="10116"/>
    <lineage>
        <taxon>Eukaryota</taxon>
        <taxon>Metazoa</taxon>
        <taxon>Chordata</taxon>
        <taxon>Craniata</taxon>
        <taxon>Vertebrata</taxon>
        <taxon>Euteleostomi</taxon>
        <taxon>Mammalia</taxon>
        <taxon>Eutheria</taxon>
        <taxon>Euarchontoglires</taxon>
        <taxon>Glires</taxon>
        <taxon>Rodentia</taxon>
        <taxon>Myomorpha</taxon>
        <taxon>Muroidea</taxon>
        <taxon>Muridae</taxon>
        <taxon>Murinae</taxon>
        <taxon>Rattus</taxon>
    </lineage>
</organism>
<reference key="1">
    <citation type="journal article" date="1992" name="Mol. Cell. Neurosci.">
        <title>Two distinct bombesin receptor subtype subtypes in ppostnatal rat central nervous system.</title>
        <authorList>
            <person name="Wada E."/>
            <person name="Way J."/>
            <person name="Shapira H."/>
            <person name="Battey J.F."/>
        </authorList>
    </citation>
    <scope>NUCLEOTIDE SEQUENCE [MRNA]</scope>
    <source>
        <tissue>Pancreatic acinar cell</tissue>
    </source>
</reference>
<reference key="2">
    <citation type="journal article" date="2004" name="Nature">
        <title>Genome sequence of the Brown Norway rat yields insights into mammalian evolution.</title>
        <authorList>
            <person name="Gibbs R.A."/>
            <person name="Weinstock G.M."/>
            <person name="Metzker M.L."/>
            <person name="Muzny D.M."/>
            <person name="Sodergren E.J."/>
            <person name="Scherer S."/>
            <person name="Scott G."/>
            <person name="Steffen D."/>
            <person name="Worley K.C."/>
            <person name="Burch P.E."/>
            <person name="Okwuonu G."/>
            <person name="Hines S."/>
            <person name="Lewis L."/>
            <person name="Deramo C."/>
            <person name="Delgado O."/>
            <person name="Dugan-Rocha S."/>
            <person name="Miner G."/>
            <person name="Morgan M."/>
            <person name="Hawes A."/>
            <person name="Gill R."/>
            <person name="Holt R.A."/>
            <person name="Adams M.D."/>
            <person name="Amanatides P.G."/>
            <person name="Baden-Tillson H."/>
            <person name="Barnstead M."/>
            <person name="Chin S."/>
            <person name="Evans C.A."/>
            <person name="Ferriera S."/>
            <person name="Fosler C."/>
            <person name="Glodek A."/>
            <person name="Gu Z."/>
            <person name="Jennings D."/>
            <person name="Kraft C.L."/>
            <person name="Nguyen T."/>
            <person name="Pfannkoch C.M."/>
            <person name="Sitter C."/>
            <person name="Sutton G.G."/>
            <person name="Venter J.C."/>
            <person name="Woodage T."/>
            <person name="Smith D."/>
            <person name="Lee H.-M."/>
            <person name="Gustafson E."/>
            <person name="Cahill P."/>
            <person name="Kana A."/>
            <person name="Doucette-Stamm L."/>
            <person name="Weinstock K."/>
            <person name="Fechtel K."/>
            <person name="Weiss R.B."/>
            <person name="Dunn D.M."/>
            <person name="Green E.D."/>
            <person name="Blakesley R.W."/>
            <person name="Bouffard G.G."/>
            <person name="De Jong P.J."/>
            <person name="Osoegawa K."/>
            <person name="Zhu B."/>
            <person name="Marra M."/>
            <person name="Schein J."/>
            <person name="Bosdet I."/>
            <person name="Fjell C."/>
            <person name="Jones S."/>
            <person name="Krzywinski M."/>
            <person name="Mathewson C."/>
            <person name="Siddiqui A."/>
            <person name="Wye N."/>
            <person name="McPherson J."/>
            <person name="Zhao S."/>
            <person name="Fraser C.M."/>
            <person name="Shetty J."/>
            <person name="Shatsman S."/>
            <person name="Geer K."/>
            <person name="Chen Y."/>
            <person name="Abramzon S."/>
            <person name="Nierman W.C."/>
            <person name="Havlak P.H."/>
            <person name="Chen R."/>
            <person name="Durbin K.J."/>
            <person name="Egan A."/>
            <person name="Ren Y."/>
            <person name="Song X.-Z."/>
            <person name="Li B."/>
            <person name="Liu Y."/>
            <person name="Qin X."/>
            <person name="Cawley S."/>
            <person name="Cooney A.J."/>
            <person name="D'Souza L.M."/>
            <person name="Martin K."/>
            <person name="Wu J.Q."/>
            <person name="Gonzalez-Garay M.L."/>
            <person name="Jackson A.R."/>
            <person name="Kalafus K.J."/>
            <person name="McLeod M.P."/>
            <person name="Milosavljevic A."/>
            <person name="Virk D."/>
            <person name="Volkov A."/>
            <person name="Wheeler D.A."/>
            <person name="Zhang Z."/>
            <person name="Bailey J.A."/>
            <person name="Eichler E.E."/>
            <person name="Tuzun E."/>
            <person name="Birney E."/>
            <person name="Mongin E."/>
            <person name="Ureta-Vidal A."/>
            <person name="Woodwark C."/>
            <person name="Zdobnov E."/>
            <person name="Bork P."/>
            <person name="Suyama M."/>
            <person name="Torrents D."/>
            <person name="Alexandersson M."/>
            <person name="Trask B.J."/>
            <person name="Young J.M."/>
            <person name="Huang H."/>
            <person name="Wang H."/>
            <person name="Xing H."/>
            <person name="Daniels S."/>
            <person name="Gietzen D."/>
            <person name="Schmidt J."/>
            <person name="Stevens K."/>
            <person name="Vitt U."/>
            <person name="Wingrove J."/>
            <person name="Camara F."/>
            <person name="Mar Alba M."/>
            <person name="Abril J.F."/>
            <person name="Guigo R."/>
            <person name="Smit A."/>
            <person name="Dubchak I."/>
            <person name="Rubin E.M."/>
            <person name="Couronne O."/>
            <person name="Poliakov A."/>
            <person name="Huebner N."/>
            <person name="Ganten D."/>
            <person name="Goesele C."/>
            <person name="Hummel O."/>
            <person name="Kreitler T."/>
            <person name="Lee Y.-A."/>
            <person name="Monti J."/>
            <person name="Schulz H."/>
            <person name="Zimdahl H."/>
            <person name="Himmelbauer H."/>
            <person name="Lehrach H."/>
            <person name="Jacob H.J."/>
            <person name="Bromberg S."/>
            <person name="Gullings-Handley J."/>
            <person name="Jensen-Seaman M.I."/>
            <person name="Kwitek A.E."/>
            <person name="Lazar J."/>
            <person name="Pasko D."/>
            <person name="Tonellato P.J."/>
            <person name="Twigger S."/>
            <person name="Ponting C.P."/>
            <person name="Duarte J.M."/>
            <person name="Rice S."/>
            <person name="Goodstadt L."/>
            <person name="Beatson S.A."/>
            <person name="Emes R.D."/>
            <person name="Winter E.E."/>
            <person name="Webber C."/>
            <person name="Brandt P."/>
            <person name="Nyakatura G."/>
            <person name="Adetobi M."/>
            <person name="Chiaromonte F."/>
            <person name="Elnitski L."/>
            <person name="Eswara P."/>
            <person name="Hardison R.C."/>
            <person name="Hou M."/>
            <person name="Kolbe D."/>
            <person name="Makova K."/>
            <person name="Miller W."/>
            <person name="Nekrutenko A."/>
            <person name="Riemer C."/>
            <person name="Schwartz S."/>
            <person name="Taylor J."/>
            <person name="Yang S."/>
            <person name="Zhang Y."/>
            <person name="Lindpaintner K."/>
            <person name="Andrews T.D."/>
            <person name="Caccamo M."/>
            <person name="Clamp M."/>
            <person name="Clarke L."/>
            <person name="Curwen V."/>
            <person name="Durbin R.M."/>
            <person name="Eyras E."/>
            <person name="Searle S.M."/>
            <person name="Cooper G.M."/>
            <person name="Batzoglou S."/>
            <person name="Brudno M."/>
            <person name="Sidow A."/>
            <person name="Stone E.A."/>
            <person name="Payseur B.A."/>
            <person name="Bourque G."/>
            <person name="Lopez-Otin C."/>
            <person name="Puente X.S."/>
            <person name="Chakrabarti K."/>
            <person name="Chatterji S."/>
            <person name="Dewey C."/>
            <person name="Pachter L."/>
            <person name="Bray N."/>
            <person name="Yap V.B."/>
            <person name="Caspi A."/>
            <person name="Tesler G."/>
            <person name="Pevzner P.A."/>
            <person name="Haussler D."/>
            <person name="Roskin K.M."/>
            <person name="Baertsch R."/>
            <person name="Clawson H."/>
            <person name="Furey T.S."/>
            <person name="Hinrichs A.S."/>
            <person name="Karolchik D."/>
            <person name="Kent W.J."/>
            <person name="Rosenbloom K.R."/>
            <person name="Trumbower H."/>
            <person name="Weirauch M."/>
            <person name="Cooper D.N."/>
            <person name="Stenson P.D."/>
            <person name="Ma B."/>
            <person name="Brent M."/>
            <person name="Arumugam M."/>
            <person name="Shteynberg D."/>
            <person name="Copley R.R."/>
            <person name="Taylor M.S."/>
            <person name="Riethman H."/>
            <person name="Mudunuri U."/>
            <person name="Peterson J."/>
            <person name="Guyer M."/>
            <person name="Felsenfeld A."/>
            <person name="Old S."/>
            <person name="Mockrin S."/>
            <person name="Collins F.S."/>
        </authorList>
    </citation>
    <scope>NUCLEOTIDE SEQUENCE [LARGE SCALE GENOMIC DNA]</scope>
    <source>
        <strain>Brown Norway</strain>
    </source>
</reference>
<reference key="3">
    <citation type="submission" date="2005-09" db="EMBL/GenBank/DDBJ databases">
        <authorList>
            <person name="Mural R.J."/>
            <person name="Adams M.D."/>
            <person name="Myers E.W."/>
            <person name="Smith H.O."/>
            <person name="Venter J.C."/>
        </authorList>
    </citation>
    <scope>NUCLEOTIDE SEQUENCE [LARGE SCALE GENOMIC DNA]</scope>
    <source>
        <strain>Brown Norway</strain>
    </source>
</reference>
<reference key="4">
    <citation type="journal article" date="1993" name="J. Mol. Neurosci.">
        <title>Molecular cloning and characterization of receptors for the mammalian bombesin-like peptides.</title>
        <authorList>
            <person name="Giladi E."/>
            <person name="Nagalla S.R."/>
            <person name="Spindel E.R."/>
        </authorList>
    </citation>
    <scope>FUNCTION</scope>
    <scope>SUBCELLULAR LOCATION</scope>
</reference>
<reference key="5">
    <citation type="journal article" date="2016" name="Nature">
        <title>The peptidergic control circuit for sighing.</title>
        <authorList>
            <person name="Li P."/>
            <person name="Janczewski W.A."/>
            <person name="Yackle K."/>
            <person name="Kam K."/>
            <person name="Pagliardini S."/>
            <person name="Krasnow M.A."/>
            <person name="Feldman J.L."/>
        </authorList>
    </citation>
    <scope>FUNCTION</scope>
</reference>
<reference key="6">
    <citation type="journal article" date="2020" name="Neuropeptides">
        <title>The effects of gastrin-releasing peptide on the voltage-gated channels in rat hippocampal neurons.</title>
        <authorList>
            <person name="Yang J."/>
            <person name="Yang X."/>
            <person name="Xiao X."/>
            <person name="Ming D."/>
        </authorList>
    </citation>
    <scope>TISSUE SPECIFICITY</scope>
</reference>
<dbReference type="EMBL" id="X56661">
    <property type="protein sequence ID" value="CAA39988.1"/>
    <property type="molecule type" value="mRNA"/>
</dbReference>
<dbReference type="EMBL" id="AABR07037836">
    <property type="status" value="NOT_ANNOTATED_CDS"/>
    <property type="molecule type" value="Genomic_DNA"/>
</dbReference>
<dbReference type="EMBL" id="CH474014">
    <property type="protein sequence ID" value="EDL90503.1"/>
    <property type="molecule type" value="Genomic_DNA"/>
</dbReference>
<dbReference type="PIR" id="I57682">
    <property type="entry name" value="I57682"/>
</dbReference>
<dbReference type="RefSeq" id="NP_036838.2">
    <property type="nucleotide sequence ID" value="NM_012706.3"/>
</dbReference>
<dbReference type="SMR" id="P52500"/>
<dbReference type="FunCoup" id="P52500">
    <property type="interactions" value="114"/>
</dbReference>
<dbReference type="STRING" id="10116.ENSRNOP00000005559"/>
<dbReference type="BindingDB" id="P52500"/>
<dbReference type="ChEMBL" id="CHEMBL4280"/>
<dbReference type="GuidetoPHARMACOLOGY" id="39"/>
<dbReference type="GlyCosmos" id="P52500">
    <property type="glycosylation" value="3 sites, No reported glycans"/>
</dbReference>
<dbReference type="GlyGen" id="P52500">
    <property type="glycosylation" value="3 sites"/>
</dbReference>
<dbReference type="PhosphoSitePlus" id="P52500"/>
<dbReference type="PaxDb" id="10116-ENSRNOP00000005559"/>
<dbReference type="Ensembl" id="ENSRNOT00000005559.7">
    <property type="protein sequence ID" value="ENSRNOP00000005559.4"/>
    <property type="gene ID" value="ENSRNOG00000004124.7"/>
</dbReference>
<dbReference type="GeneID" id="24938"/>
<dbReference type="KEGG" id="rno:24938"/>
<dbReference type="UCSC" id="RGD:2750">
    <property type="organism name" value="rat"/>
</dbReference>
<dbReference type="AGR" id="RGD:2750"/>
<dbReference type="CTD" id="2925"/>
<dbReference type="RGD" id="2750">
    <property type="gene designation" value="Grpr"/>
</dbReference>
<dbReference type="eggNOG" id="KOG3656">
    <property type="taxonomic scope" value="Eukaryota"/>
</dbReference>
<dbReference type="GeneTree" id="ENSGT01120000271837"/>
<dbReference type="InParanoid" id="P52500"/>
<dbReference type="OMA" id="HAFTTSH"/>
<dbReference type="OrthoDB" id="10049706at2759"/>
<dbReference type="PhylomeDB" id="P52500"/>
<dbReference type="TreeFam" id="TF331292"/>
<dbReference type="Reactome" id="R-RNO-375276">
    <property type="pathway name" value="Peptide ligand-binding receptors"/>
</dbReference>
<dbReference type="Reactome" id="R-RNO-416476">
    <property type="pathway name" value="G alpha (q) signalling events"/>
</dbReference>
<dbReference type="PRO" id="PR:P52500"/>
<dbReference type="Proteomes" id="UP000002494">
    <property type="component" value="Chromosome X"/>
</dbReference>
<dbReference type="Proteomes" id="UP000234681">
    <property type="component" value="Chromosome x"/>
</dbReference>
<dbReference type="Bgee" id="ENSRNOG00000004124">
    <property type="expression patterns" value="Expressed in pancreas and 7 other cell types or tissues"/>
</dbReference>
<dbReference type="GO" id="GO:0005886">
    <property type="term" value="C:plasma membrane"/>
    <property type="evidence" value="ECO:0000250"/>
    <property type="project" value="UniProtKB"/>
</dbReference>
<dbReference type="GO" id="GO:0004946">
    <property type="term" value="F:bombesin receptor activity"/>
    <property type="evidence" value="ECO:0000304"/>
    <property type="project" value="RGD"/>
</dbReference>
<dbReference type="GO" id="GO:0008528">
    <property type="term" value="F:G protein-coupled peptide receptor activity"/>
    <property type="evidence" value="ECO:0000266"/>
    <property type="project" value="RGD"/>
</dbReference>
<dbReference type="GO" id="GO:0004930">
    <property type="term" value="F:G protein-coupled receptor activity"/>
    <property type="evidence" value="ECO:0000314"/>
    <property type="project" value="RGD"/>
</dbReference>
<dbReference type="GO" id="GO:0042923">
    <property type="term" value="F:neuropeptide binding"/>
    <property type="evidence" value="ECO:0000314"/>
    <property type="project" value="RGD"/>
</dbReference>
<dbReference type="GO" id="GO:0008188">
    <property type="term" value="F:neuropeptide receptor activity"/>
    <property type="evidence" value="ECO:0000250"/>
    <property type="project" value="UniProtKB"/>
</dbReference>
<dbReference type="GO" id="GO:0007186">
    <property type="term" value="P:G protein-coupled receptor signaling pathway"/>
    <property type="evidence" value="ECO:0000314"/>
    <property type="project" value="RGD"/>
</dbReference>
<dbReference type="GO" id="GO:0007611">
    <property type="term" value="P:learning or memory"/>
    <property type="evidence" value="ECO:0000315"/>
    <property type="project" value="RGD"/>
</dbReference>
<dbReference type="GO" id="GO:0061744">
    <property type="term" value="P:motor behavior"/>
    <property type="evidence" value="ECO:0000250"/>
    <property type="project" value="UniProtKB"/>
</dbReference>
<dbReference type="GO" id="GO:0007200">
    <property type="term" value="P:phospholipase C-activating G protein-coupled receptor signaling pathway"/>
    <property type="evidence" value="ECO:0000250"/>
    <property type="project" value="UniProtKB"/>
</dbReference>
<dbReference type="GO" id="GO:2000987">
    <property type="term" value="P:positive regulation of behavioral fear response"/>
    <property type="evidence" value="ECO:0000250"/>
    <property type="project" value="UniProtKB"/>
</dbReference>
<dbReference type="GO" id="GO:1903942">
    <property type="term" value="P:positive regulation of respiratory gaseous exchange"/>
    <property type="evidence" value="ECO:0000250"/>
    <property type="project" value="UniProtKB"/>
</dbReference>
<dbReference type="GO" id="GO:0036343">
    <property type="term" value="P:psychomotor behavior"/>
    <property type="evidence" value="ECO:0000266"/>
    <property type="project" value="RGD"/>
</dbReference>
<dbReference type="GO" id="GO:0042127">
    <property type="term" value="P:regulation of cell population proliferation"/>
    <property type="evidence" value="ECO:0000266"/>
    <property type="project" value="RGD"/>
</dbReference>
<dbReference type="GO" id="GO:0043207">
    <property type="term" value="P:response to external biotic stimulus"/>
    <property type="evidence" value="ECO:0000266"/>
    <property type="project" value="RGD"/>
</dbReference>
<dbReference type="GO" id="GO:0035176">
    <property type="term" value="P:social behavior"/>
    <property type="evidence" value="ECO:0000315"/>
    <property type="project" value="RGD"/>
</dbReference>
<dbReference type="CDD" id="cd15124">
    <property type="entry name" value="7tmA_GRPR"/>
    <property type="match status" value="1"/>
</dbReference>
<dbReference type="FunFam" id="1.20.1070.10:FF:000122">
    <property type="entry name" value="Gastrin-releasing peptide receptor"/>
    <property type="match status" value="1"/>
</dbReference>
<dbReference type="Gene3D" id="1.20.1070.10">
    <property type="entry name" value="Rhodopsin 7-helix transmembrane proteins"/>
    <property type="match status" value="1"/>
</dbReference>
<dbReference type="InterPro" id="IPR001556">
    <property type="entry name" value="Bombsn_rcpt-like"/>
</dbReference>
<dbReference type="InterPro" id="IPR001966">
    <property type="entry name" value="Gastrin_pep_rcpt"/>
</dbReference>
<dbReference type="InterPro" id="IPR000276">
    <property type="entry name" value="GPCR_Rhodpsn"/>
</dbReference>
<dbReference type="InterPro" id="IPR017452">
    <property type="entry name" value="GPCR_Rhodpsn_7TM"/>
</dbReference>
<dbReference type="PANTHER" id="PTHR45695:SF7">
    <property type="entry name" value="GASTRIN-RELEASING PEPTIDE RECEPTOR"/>
    <property type="match status" value="1"/>
</dbReference>
<dbReference type="PANTHER" id="PTHR45695">
    <property type="entry name" value="LEUCOKININ RECEPTOR-RELATED"/>
    <property type="match status" value="1"/>
</dbReference>
<dbReference type="Pfam" id="PF00001">
    <property type="entry name" value="7tm_1"/>
    <property type="match status" value="1"/>
</dbReference>
<dbReference type="PRINTS" id="PR00358">
    <property type="entry name" value="BOMBESINR"/>
</dbReference>
<dbReference type="PRINTS" id="PR00640">
    <property type="entry name" value="GASTRINRELPR"/>
</dbReference>
<dbReference type="PRINTS" id="PR00237">
    <property type="entry name" value="GPCRRHODOPSN"/>
</dbReference>
<dbReference type="SMART" id="SM01381">
    <property type="entry name" value="7TM_GPCR_Srsx"/>
    <property type="match status" value="1"/>
</dbReference>
<dbReference type="SUPFAM" id="SSF81321">
    <property type="entry name" value="Family A G protein-coupled receptor-like"/>
    <property type="match status" value="1"/>
</dbReference>
<dbReference type="PROSITE" id="PS00237">
    <property type="entry name" value="G_PROTEIN_RECEP_F1_1"/>
    <property type="match status" value="1"/>
</dbReference>
<dbReference type="PROSITE" id="PS50262">
    <property type="entry name" value="G_PROTEIN_RECEP_F1_2"/>
    <property type="match status" value="1"/>
</dbReference>
<protein>
    <recommendedName>
        <fullName>Gastrin-releasing peptide receptor</fullName>
        <shortName>GRP-R</shortName>
    </recommendedName>
    <alternativeName>
        <fullName>GRP-preferring bombesin receptor</fullName>
    </alternativeName>
</protein>
<proteinExistence type="evidence at protein level"/>